<protein>
    <recommendedName>
        <fullName evidence="4">Tyrosine recombinase Synpcc7942_B2651</fullName>
    </recommendedName>
</protein>
<accession>Q8KUV2</accession>
<accession>Q31JS7</accession>
<proteinExistence type="inferred from homology"/>
<keyword id="KW-0131">Cell cycle</keyword>
<keyword id="KW-0132">Cell division</keyword>
<keyword id="KW-0159">Chromosome partition</keyword>
<keyword id="KW-0963">Cytoplasm</keyword>
<keyword id="KW-0229">DNA integration</keyword>
<keyword id="KW-0233">DNA recombination</keyword>
<keyword id="KW-0238">DNA-binding</keyword>
<keyword id="KW-0614">Plasmid</keyword>
<keyword id="KW-1185">Reference proteome</keyword>
<evidence type="ECO:0000250" key="1">
    <source>
        <dbReference type="UniProtKB" id="P0A8P8"/>
    </source>
</evidence>
<evidence type="ECO:0000255" key="2">
    <source>
        <dbReference type="PROSITE-ProRule" id="PRU01246"/>
    </source>
</evidence>
<evidence type="ECO:0000255" key="3">
    <source>
        <dbReference type="PROSITE-ProRule" id="PRU01248"/>
    </source>
</evidence>
<evidence type="ECO:0000305" key="4"/>
<geneLocation type="plasmid">
    <name>pANL</name>
</geneLocation>
<dbReference type="EMBL" id="AF441790">
    <property type="protein sequence ID" value="AAM81156.2"/>
    <property type="molecule type" value="Genomic_DNA"/>
</dbReference>
<dbReference type="EMBL" id="CP000101">
    <property type="protein sequence ID" value="ABB58680.1"/>
    <property type="molecule type" value="Genomic_DNA"/>
</dbReference>
<dbReference type="RefSeq" id="NP_665769.2">
    <property type="nucleotide sequence ID" value="NC_004073.2"/>
</dbReference>
<dbReference type="RefSeq" id="WP_011055144.1">
    <property type="nucleotide sequence ID" value="NZ_JACJTX010000007.1"/>
</dbReference>
<dbReference type="SMR" id="Q8KUV2"/>
<dbReference type="PaxDb" id="1140-Synpcc7942_B2651"/>
<dbReference type="KEGG" id="syf:Synpcc7942_B2651"/>
<dbReference type="eggNOG" id="COG0582">
    <property type="taxonomic scope" value="Bacteria"/>
</dbReference>
<dbReference type="HOGENOM" id="CLU_027562_9_6_3"/>
<dbReference type="OrthoDB" id="550438at2"/>
<dbReference type="BioCyc" id="SYNEL:SYNPCC7942_B2651-MONOMER"/>
<dbReference type="Proteomes" id="UP000889800">
    <property type="component" value="Plasmid pANL"/>
</dbReference>
<dbReference type="GO" id="GO:0005737">
    <property type="term" value="C:cytoplasm"/>
    <property type="evidence" value="ECO:0007669"/>
    <property type="project" value="UniProtKB-SubCell"/>
</dbReference>
<dbReference type="GO" id="GO:0003677">
    <property type="term" value="F:DNA binding"/>
    <property type="evidence" value="ECO:0007669"/>
    <property type="project" value="UniProtKB-KW"/>
</dbReference>
<dbReference type="GO" id="GO:0051301">
    <property type="term" value="P:cell division"/>
    <property type="evidence" value="ECO:0007669"/>
    <property type="project" value="UniProtKB-KW"/>
</dbReference>
<dbReference type="GO" id="GO:0007059">
    <property type="term" value="P:chromosome segregation"/>
    <property type="evidence" value="ECO:0007669"/>
    <property type="project" value="UniProtKB-KW"/>
</dbReference>
<dbReference type="GO" id="GO:0015074">
    <property type="term" value="P:DNA integration"/>
    <property type="evidence" value="ECO:0007669"/>
    <property type="project" value="UniProtKB-KW"/>
</dbReference>
<dbReference type="GO" id="GO:0006310">
    <property type="term" value="P:DNA recombination"/>
    <property type="evidence" value="ECO:0007669"/>
    <property type="project" value="UniProtKB-KW"/>
</dbReference>
<dbReference type="CDD" id="cd01195">
    <property type="entry name" value="INT_C_like_5"/>
    <property type="match status" value="1"/>
</dbReference>
<dbReference type="Gene3D" id="1.10.150.130">
    <property type="match status" value="1"/>
</dbReference>
<dbReference type="Gene3D" id="1.10.443.10">
    <property type="entry name" value="Intergrase catalytic core"/>
    <property type="match status" value="1"/>
</dbReference>
<dbReference type="InterPro" id="IPR044068">
    <property type="entry name" value="CB"/>
</dbReference>
<dbReference type="InterPro" id="IPR011010">
    <property type="entry name" value="DNA_brk_join_enz"/>
</dbReference>
<dbReference type="InterPro" id="IPR013762">
    <property type="entry name" value="Integrase-like_cat_sf"/>
</dbReference>
<dbReference type="InterPro" id="IPR002104">
    <property type="entry name" value="Integrase_catalytic"/>
</dbReference>
<dbReference type="InterPro" id="IPR010998">
    <property type="entry name" value="Integrase_recombinase_N"/>
</dbReference>
<dbReference type="InterPro" id="IPR004107">
    <property type="entry name" value="Integrase_SAM-like_N"/>
</dbReference>
<dbReference type="InterPro" id="IPR050090">
    <property type="entry name" value="Tyrosine_recombinase_XerCD"/>
</dbReference>
<dbReference type="PANTHER" id="PTHR30349">
    <property type="entry name" value="PHAGE INTEGRASE-RELATED"/>
    <property type="match status" value="1"/>
</dbReference>
<dbReference type="PANTHER" id="PTHR30349:SF64">
    <property type="entry name" value="PROPHAGE INTEGRASE INTD-RELATED"/>
    <property type="match status" value="1"/>
</dbReference>
<dbReference type="Pfam" id="PF02899">
    <property type="entry name" value="Phage_int_SAM_1"/>
    <property type="match status" value="1"/>
</dbReference>
<dbReference type="Pfam" id="PF00589">
    <property type="entry name" value="Phage_integrase"/>
    <property type="match status" value="1"/>
</dbReference>
<dbReference type="SUPFAM" id="SSF56349">
    <property type="entry name" value="DNA breaking-rejoining enzymes"/>
    <property type="match status" value="1"/>
</dbReference>
<dbReference type="SUPFAM" id="SSF47823">
    <property type="entry name" value="lambda integrase-like, N-terminal domain"/>
    <property type="match status" value="1"/>
</dbReference>
<dbReference type="PROSITE" id="PS51900">
    <property type="entry name" value="CB"/>
    <property type="match status" value="1"/>
</dbReference>
<dbReference type="PROSITE" id="PS51898">
    <property type="entry name" value="TYR_RECOMBINASE"/>
    <property type="match status" value="1"/>
</dbReference>
<sequence>MTEAIAVVESRAIAPVQDWDVLQMLLEDHRSPNTRRAYDRDLRLFFAWWLDEDPHPEAIAYWLSLPQSEAIAVVLRWKASMRDRGLAEATINRRLAALKSLVRFSRRLGRCTFSLEDVKGDRVQSYRDTTGTTPERFRELLALPNRQTAKGARDYAILRLLWENALRRSEAVQTRVQDLEQGDRRLWILGKGKGRQRLPVSLSVEMVQALQDWLRWHPKAEPEQPLFTALDRRSYGQQLSDQAVYLLVKRSAEAIKLGKRLSPHRIRHSAITAALDATGGNIRLVQKLSRHSRLETLQRYDDARQDFQGECTEHLAKLLG</sequence>
<name>XER_SYNE7</name>
<gene>
    <name type="ordered locus">Synpcc7942_B2651</name>
    <name type="ORF">pANL28</name>
    <name type="ORF">sex3028</name>
</gene>
<feature type="chain" id="PRO_0000095340" description="Tyrosine recombinase Synpcc7942_B2651">
    <location>
        <begin position="1"/>
        <end position="320"/>
    </location>
</feature>
<feature type="domain" description="Core-binding (CB)" evidence="3">
    <location>
        <begin position="16"/>
        <end position="106"/>
    </location>
</feature>
<feature type="domain" description="Tyr recombinase" evidence="2">
    <location>
        <begin position="127"/>
        <end position="313"/>
    </location>
</feature>
<feature type="active site" evidence="2">
    <location>
        <position position="167"/>
    </location>
</feature>
<feature type="active site" evidence="2">
    <location>
        <position position="193"/>
    </location>
</feature>
<feature type="active site" evidence="2">
    <location>
        <position position="264"/>
    </location>
</feature>
<feature type="active site" evidence="2">
    <location>
        <position position="267"/>
    </location>
</feature>
<feature type="active site" evidence="2">
    <location>
        <position position="291"/>
    </location>
</feature>
<feature type="active site" description="O-(3'-phospho-DNA)-tyrosine intermediate" evidence="2">
    <location>
        <position position="300"/>
    </location>
</feature>
<comment type="function">
    <text evidence="1">Site-specific tyrosine recombinase, which acts by catalyzing the cutting and rejoining of the recombining DNA molecules.</text>
</comment>
<comment type="subcellular location">
    <subcellularLocation>
        <location evidence="4">Cytoplasm</location>
    </subcellularLocation>
</comment>
<comment type="similarity">
    <text evidence="4">Belongs to the 'phage' integrase family.</text>
</comment>
<organism>
    <name type="scientific">Synechococcus elongatus (strain ATCC 33912 / PCC 7942 / FACHB-805)</name>
    <name type="common">Anacystis nidulans R2</name>
    <dbReference type="NCBI Taxonomy" id="1140"/>
    <lineage>
        <taxon>Bacteria</taxon>
        <taxon>Bacillati</taxon>
        <taxon>Cyanobacteriota</taxon>
        <taxon>Cyanophyceae</taxon>
        <taxon>Synechococcales</taxon>
        <taxon>Synechococcaceae</taxon>
        <taxon>Synechococcus</taxon>
    </lineage>
</organism>
<reference key="1">
    <citation type="submission" date="2004-05" db="EMBL/GenBank/DDBJ databases">
        <title>pANL, the large plasmid of Synechococcus elongatus PCC 7942.</title>
        <authorList>
            <person name="Holtman C.K."/>
            <person name="Chen Y."/>
            <person name="Sandoval P."/>
            <person name="Socias T."/>
            <person name="Mohler B.J."/>
            <person name="Youderian P."/>
            <person name="Golden S.S."/>
        </authorList>
    </citation>
    <scope>NUCLEOTIDE SEQUENCE [GENOMIC DNA]</scope>
    <source>
        <strain>ATCC 33912 / PCC 7942 / FACHB-805</strain>
        <plasmid>pANL</plasmid>
    </source>
</reference>
<reference key="2">
    <citation type="submission" date="2005-08" db="EMBL/GenBank/DDBJ databases">
        <title>Complete sequence of plasmid 1 of Synechococcus elongatus PCC 7942.</title>
        <authorList>
            <consortium name="US DOE Joint Genome Institute"/>
            <person name="Copeland A."/>
            <person name="Lucas S."/>
            <person name="Lapidus A."/>
            <person name="Barry K."/>
            <person name="Detter J.C."/>
            <person name="Glavina T."/>
            <person name="Hammon N."/>
            <person name="Israni S."/>
            <person name="Pitluck S."/>
            <person name="Schmutz J."/>
            <person name="Larimer F."/>
            <person name="Land M."/>
            <person name="Kyrpides N."/>
            <person name="Lykidis A."/>
            <person name="Golden S."/>
            <person name="Richardson P."/>
        </authorList>
    </citation>
    <scope>NUCLEOTIDE SEQUENCE [LARGE SCALE GENOMIC DNA]</scope>
    <source>
        <strain>ATCC 33912 / PCC 7942 / FACHB-805</strain>
        <plasmid>pANL</plasmid>
    </source>
</reference>